<proteinExistence type="inferred from homology"/>
<feature type="transit peptide" description="Mitochondrion" evidence="2">
    <location>
        <begin position="1"/>
        <end status="unknown"/>
    </location>
</feature>
<feature type="chain" id="PRO_0000327476" description="Probable asparagine--tRNA ligase, mitochondrial">
    <location>
        <begin status="unknown"/>
        <end position="460"/>
    </location>
</feature>
<organism>
    <name type="scientific">Dictyostelium discoideum</name>
    <name type="common">Social amoeba</name>
    <dbReference type="NCBI Taxonomy" id="44689"/>
    <lineage>
        <taxon>Eukaryota</taxon>
        <taxon>Amoebozoa</taxon>
        <taxon>Evosea</taxon>
        <taxon>Eumycetozoa</taxon>
        <taxon>Dictyostelia</taxon>
        <taxon>Dictyosteliales</taxon>
        <taxon>Dictyosteliaceae</taxon>
        <taxon>Dictyostelium</taxon>
    </lineage>
</organism>
<accession>Q55FI3</accession>
<dbReference type="EC" id="6.1.1.22"/>
<dbReference type="EMBL" id="AAFI02000003">
    <property type="protein sequence ID" value="EAL73503.1"/>
    <property type="molecule type" value="Genomic_DNA"/>
</dbReference>
<dbReference type="RefSeq" id="XP_647550.1">
    <property type="nucleotide sequence ID" value="XM_642458.1"/>
</dbReference>
<dbReference type="SMR" id="Q55FI3"/>
<dbReference type="FunCoup" id="Q55FI3">
    <property type="interactions" value="492"/>
</dbReference>
<dbReference type="STRING" id="44689.Q55FI3"/>
<dbReference type="GlyGen" id="Q55FI3">
    <property type="glycosylation" value="1 site"/>
</dbReference>
<dbReference type="PaxDb" id="44689-DDB0231334"/>
<dbReference type="EnsemblProtists" id="EAL73503">
    <property type="protein sequence ID" value="EAL73503"/>
    <property type="gene ID" value="DDB_G0268100"/>
</dbReference>
<dbReference type="GeneID" id="8616358"/>
<dbReference type="KEGG" id="ddi:DDB_G0268100"/>
<dbReference type="dictyBase" id="DDB_G0268100">
    <property type="gene designation" value="asnS2"/>
</dbReference>
<dbReference type="VEuPathDB" id="AmoebaDB:DDB_G0268100"/>
<dbReference type="eggNOG" id="KOG0554">
    <property type="taxonomic scope" value="Eukaryota"/>
</dbReference>
<dbReference type="HOGENOM" id="CLU_004553_2_0_1"/>
<dbReference type="InParanoid" id="Q55FI3"/>
<dbReference type="OMA" id="PRFPGQC"/>
<dbReference type="PhylomeDB" id="Q55FI3"/>
<dbReference type="PRO" id="PR:Q55FI3"/>
<dbReference type="Proteomes" id="UP000002195">
    <property type="component" value="Chromosome 1"/>
</dbReference>
<dbReference type="GO" id="GO:0005759">
    <property type="term" value="C:mitochondrial matrix"/>
    <property type="evidence" value="ECO:0007669"/>
    <property type="project" value="UniProtKB-SubCell"/>
</dbReference>
<dbReference type="GO" id="GO:0005739">
    <property type="term" value="C:mitochondrion"/>
    <property type="evidence" value="ECO:0000250"/>
    <property type="project" value="UniProtKB"/>
</dbReference>
<dbReference type="GO" id="GO:0004816">
    <property type="term" value="F:asparagine-tRNA ligase activity"/>
    <property type="evidence" value="ECO:0000250"/>
    <property type="project" value="UniProtKB"/>
</dbReference>
<dbReference type="GO" id="GO:0005524">
    <property type="term" value="F:ATP binding"/>
    <property type="evidence" value="ECO:0007669"/>
    <property type="project" value="UniProtKB-KW"/>
</dbReference>
<dbReference type="GO" id="GO:0003676">
    <property type="term" value="F:nucleic acid binding"/>
    <property type="evidence" value="ECO:0007669"/>
    <property type="project" value="InterPro"/>
</dbReference>
<dbReference type="GO" id="GO:0006421">
    <property type="term" value="P:asparaginyl-tRNA aminoacylation"/>
    <property type="evidence" value="ECO:0000250"/>
    <property type="project" value="UniProtKB"/>
</dbReference>
<dbReference type="CDD" id="cd00776">
    <property type="entry name" value="AsxRS_core"/>
    <property type="match status" value="1"/>
</dbReference>
<dbReference type="CDD" id="cd04318">
    <property type="entry name" value="EcAsnRS_like_N"/>
    <property type="match status" value="1"/>
</dbReference>
<dbReference type="FunFam" id="3.30.930.10:FF:000016">
    <property type="entry name" value="Asparagine--tRNA ligase"/>
    <property type="match status" value="1"/>
</dbReference>
<dbReference type="Gene3D" id="3.30.930.10">
    <property type="entry name" value="Bira Bifunctional Protein, Domain 2"/>
    <property type="match status" value="1"/>
</dbReference>
<dbReference type="Gene3D" id="2.40.50.140">
    <property type="entry name" value="Nucleic acid-binding proteins"/>
    <property type="match status" value="1"/>
</dbReference>
<dbReference type="HAMAP" id="MF_00534">
    <property type="entry name" value="Asn_tRNA_synth"/>
    <property type="match status" value="1"/>
</dbReference>
<dbReference type="InterPro" id="IPR004364">
    <property type="entry name" value="Aa-tRNA-synt_II"/>
</dbReference>
<dbReference type="InterPro" id="IPR006195">
    <property type="entry name" value="aa-tRNA-synth_II"/>
</dbReference>
<dbReference type="InterPro" id="IPR045864">
    <property type="entry name" value="aa-tRNA-synth_II/BPL/LPL"/>
</dbReference>
<dbReference type="InterPro" id="IPR004522">
    <property type="entry name" value="Asn-tRNA-ligase"/>
</dbReference>
<dbReference type="InterPro" id="IPR002312">
    <property type="entry name" value="Asp/Asn-tRNA-synth_IIb"/>
</dbReference>
<dbReference type="InterPro" id="IPR012340">
    <property type="entry name" value="NA-bd_OB-fold"/>
</dbReference>
<dbReference type="InterPro" id="IPR004365">
    <property type="entry name" value="NA-bd_OB_tRNA"/>
</dbReference>
<dbReference type="NCBIfam" id="TIGR00457">
    <property type="entry name" value="asnS"/>
    <property type="match status" value="1"/>
</dbReference>
<dbReference type="NCBIfam" id="NF003037">
    <property type="entry name" value="PRK03932.1"/>
    <property type="match status" value="1"/>
</dbReference>
<dbReference type="PANTHER" id="PTHR22594:SF34">
    <property type="entry name" value="ASPARAGINE--TRNA LIGASE, MITOCHONDRIAL-RELATED"/>
    <property type="match status" value="1"/>
</dbReference>
<dbReference type="PANTHER" id="PTHR22594">
    <property type="entry name" value="ASPARTYL/LYSYL-TRNA SYNTHETASE"/>
    <property type="match status" value="1"/>
</dbReference>
<dbReference type="Pfam" id="PF00152">
    <property type="entry name" value="tRNA-synt_2"/>
    <property type="match status" value="1"/>
</dbReference>
<dbReference type="Pfam" id="PF01336">
    <property type="entry name" value="tRNA_anti-codon"/>
    <property type="match status" value="1"/>
</dbReference>
<dbReference type="PRINTS" id="PR01042">
    <property type="entry name" value="TRNASYNTHASP"/>
</dbReference>
<dbReference type="SUPFAM" id="SSF55681">
    <property type="entry name" value="Class II aaRS and biotin synthetases"/>
    <property type="match status" value="1"/>
</dbReference>
<dbReference type="SUPFAM" id="SSF50249">
    <property type="entry name" value="Nucleic acid-binding proteins"/>
    <property type="match status" value="1"/>
</dbReference>
<dbReference type="PROSITE" id="PS50862">
    <property type="entry name" value="AA_TRNA_LIGASE_II"/>
    <property type="match status" value="1"/>
</dbReference>
<sequence>MNNIIKRFYKWPIRINEINKNNKDLIGKEIKVKGWVRNIRNQKSVSFIELGDGSSIKGLQIVGDKDSFSKLKYGSSIEVNGKLINSLGNDKEAIEVQLTEPYKLIGNCPDCYPLQPKNHSFEFLRDIAHIRSRGNSIGALLRVRNKSTQLIHQYFNDNGFINVHTPIITASDCEGGGEQFQIKSSLDTKESMFFGQPSFLTVSGQLEAEIYACSHSRVYTFGPTFRAEKSNTPRHLSEFWMIEPEMAFIDLNDNLDIAEDFCKYLIRNLLDSCKEDIEFFNKRIDTNLLSRLEKTLSTPFIRLEYKDAIQLLQNNNHPIKWGDDIQREQEKFITTHFGEIPVFVINWPKSIKPFYMRENEQTDHSNIMPTVSNMDLLVPTVGELIGGSIREERYDKLLNTINEMGMDKDQYSWYLDLRKYGTVPHGGFGLGFERFLQFVTGLQNIKDVIPIPRHQNYCKF</sequence>
<name>SYNM_DICDI</name>
<gene>
    <name type="primary">asnS2</name>
    <name type="ORF">DDB_G0268100</name>
</gene>
<reference key="1">
    <citation type="journal article" date="2005" name="Nature">
        <title>The genome of the social amoeba Dictyostelium discoideum.</title>
        <authorList>
            <person name="Eichinger L."/>
            <person name="Pachebat J.A."/>
            <person name="Gloeckner G."/>
            <person name="Rajandream M.A."/>
            <person name="Sucgang R."/>
            <person name="Berriman M."/>
            <person name="Song J."/>
            <person name="Olsen R."/>
            <person name="Szafranski K."/>
            <person name="Xu Q."/>
            <person name="Tunggal B."/>
            <person name="Kummerfeld S."/>
            <person name="Madera M."/>
            <person name="Konfortov B.A."/>
            <person name="Rivero F."/>
            <person name="Bankier A.T."/>
            <person name="Lehmann R."/>
            <person name="Hamlin N."/>
            <person name="Davies R."/>
            <person name="Gaudet P."/>
            <person name="Fey P."/>
            <person name="Pilcher K."/>
            <person name="Chen G."/>
            <person name="Saunders D."/>
            <person name="Sodergren E.J."/>
            <person name="Davis P."/>
            <person name="Kerhornou A."/>
            <person name="Nie X."/>
            <person name="Hall N."/>
            <person name="Anjard C."/>
            <person name="Hemphill L."/>
            <person name="Bason N."/>
            <person name="Farbrother P."/>
            <person name="Desany B."/>
            <person name="Just E."/>
            <person name="Morio T."/>
            <person name="Rost R."/>
            <person name="Churcher C.M."/>
            <person name="Cooper J."/>
            <person name="Haydock S."/>
            <person name="van Driessche N."/>
            <person name="Cronin A."/>
            <person name="Goodhead I."/>
            <person name="Muzny D.M."/>
            <person name="Mourier T."/>
            <person name="Pain A."/>
            <person name="Lu M."/>
            <person name="Harper D."/>
            <person name="Lindsay R."/>
            <person name="Hauser H."/>
            <person name="James K.D."/>
            <person name="Quiles M."/>
            <person name="Madan Babu M."/>
            <person name="Saito T."/>
            <person name="Buchrieser C."/>
            <person name="Wardroper A."/>
            <person name="Felder M."/>
            <person name="Thangavelu M."/>
            <person name="Johnson D."/>
            <person name="Knights A."/>
            <person name="Loulseged H."/>
            <person name="Mungall K.L."/>
            <person name="Oliver K."/>
            <person name="Price C."/>
            <person name="Quail M.A."/>
            <person name="Urushihara H."/>
            <person name="Hernandez J."/>
            <person name="Rabbinowitsch E."/>
            <person name="Steffen D."/>
            <person name="Sanders M."/>
            <person name="Ma J."/>
            <person name="Kohara Y."/>
            <person name="Sharp S."/>
            <person name="Simmonds M.N."/>
            <person name="Spiegler S."/>
            <person name="Tivey A."/>
            <person name="Sugano S."/>
            <person name="White B."/>
            <person name="Walker D."/>
            <person name="Woodward J.R."/>
            <person name="Winckler T."/>
            <person name="Tanaka Y."/>
            <person name="Shaulsky G."/>
            <person name="Schleicher M."/>
            <person name="Weinstock G.M."/>
            <person name="Rosenthal A."/>
            <person name="Cox E.C."/>
            <person name="Chisholm R.L."/>
            <person name="Gibbs R.A."/>
            <person name="Loomis W.F."/>
            <person name="Platzer M."/>
            <person name="Kay R.R."/>
            <person name="Williams J.G."/>
            <person name="Dear P.H."/>
            <person name="Noegel A.A."/>
            <person name="Barrell B.G."/>
            <person name="Kuspa A."/>
        </authorList>
    </citation>
    <scope>NUCLEOTIDE SEQUENCE [LARGE SCALE GENOMIC DNA]</scope>
    <source>
        <strain>AX4</strain>
    </source>
</reference>
<protein>
    <recommendedName>
        <fullName>Probable asparagine--tRNA ligase, mitochondrial</fullName>
        <ecNumber>6.1.1.22</ecNumber>
    </recommendedName>
    <alternativeName>
        <fullName>Asparaginyl-tRNA synthetase</fullName>
        <shortName>AsnRS</shortName>
    </alternativeName>
</protein>
<keyword id="KW-0030">Aminoacyl-tRNA synthetase</keyword>
<keyword id="KW-0067">ATP-binding</keyword>
<keyword id="KW-0436">Ligase</keyword>
<keyword id="KW-0496">Mitochondrion</keyword>
<keyword id="KW-0547">Nucleotide-binding</keyword>
<keyword id="KW-0648">Protein biosynthesis</keyword>
<keyword id="KW-1185">Reference proteome</keyword>
<keyword id="KW-0809">Transit peptide</keyword>
<evidence type="ECO:0000250" key="1"/>
<evidence type="ECO:0000255" key="2"/>
<evidence type="ECO:0000305" key="3"/>
<comment type="catalytic activity">
    <reaction>
        <text>tRNA(Asn) + L-asparagine + ATP = L-asparaginyl-tRNA(Asn) + AMP + diphosphate + H(+)</text>
        <dbReference type="Rhea" id="RHEA:11180"/>
        <dbReference type="Rhea" id="RHEA-COMP:9659"/>
        <dbReference type="Rhea" id="RHEA-COMP:9674"/>
        <dbReference type="ChEBI" id="CHEBI:15378"/>
        <dbReference type="ChEBI" id="CHEBI:30616"/>
        <dbReference type="ChEBI" id="CHEBI:33019"/>
        <dbReference type="ChEBI" id="CHEBI:58048"/>
        <dbReference type="ChEBI" id="CHEBI:78442"/>
        <dbReference type="ChEBI" id="CHEBI:78515"/>
        <dbReference type="ChEBI" id="CHEBI:456215"/>
        <dbReference type="EC" id="6.1.1.22"/>
    </reaction>
</comment>
<comment type="subcellular location">
    <subcellularLocation>
        <location evidence="1">Mitochondrion matrix</location>
    </subcellularLocation>
</comment>
<comment type="similarity">
    <text evidence="3">Belongs to the class-II aminoacyl-tRNA synthetase family.</text>
</comment>